<protein>
    <recommendedName>
        <fullName>Heat shock 70 kDa protein homolog</fullName>
    </recommendedName>
</protein>
<organismHost>
    <name type="scientific">Acanthamoeba polyphaga</name>
    <name type="common">Amoeba</name>
    <dbReference type="NCBI Taxonomy" id="5757"/>
</organismHost>
<accession>Q5UQ49</accession>
<keyword id="KW-0067">ATP-binding</keyword>
<keyword id="KW-0143">Chaperone</keyword>
<keyword id="KW-0547">Nucleotide-binding</keyword>
<keyword id="KW-1185">Reference proteome</keyword>
<name>HSP70_MIMIV</name>
<proteinExistence type="inferred from homology"/>
<feature type="chain" id="PRO_0000078671" description="Heat shock 70 kDa protein homolog">
    <location>
        <begin position="1"/>
        <end position="634"/>
    </location>
</feature>
<feature type="region of interest" description="Disordered" evidence="2">
    <location>
        <begin position="611"/>
        <end position="634"/>
    </location>
</feature>
<feature type="compositionally biased region" description="Polar residues" evidence="2">
    <location>
        <begin position="612"/>
        <end position="628"/>
    </location>
</feature>
<sequence length="634" mass="70514">MSDKIAIGIDLGTTFSCVGVWQNGKVEIIANDQGNRTTPSYVSFTETEHLIGDAAKYQAAINPTNTIFDAKRLIGRDFNDQSVQSDMKYWPFKVINVGNKPYFEVSYQNESKQYSPEQISSMILSKMKQTASAYIGKEVTDAVITVPAYFNDSQRQATKDAGRIAGLNVLRIINEPTAAAFAYGLDKNQDKEMNVLIFDMGGGTHDVTLLSLEDGLFQVRATSGNTKLGGEDFDNRLVTWCVEDFKRKYKTDLNQSAKALRRLRTACERAKRALSSSTQTTIEVDSLFEGIDYNVTLTRAKFEELCSDLFRAGLEPVEKVLLDSKLDKSQVHEIVLVGGSSRIPKVRQLLSNFFNGKKLNETVNPDEAVAYGAAIQAAILVGQTDEKLQNIVLVDVTPLSLGLETAGGIMTNIIDRNTTIPCKKSRVFTTYSDNQTVVTIQIFEGERKFTKDNNNLGTFNLEGIPPAQRGVPQIEVTFDLDANGILNVTAADKSTNKSKNITITNNRGRFSEDQIERMIREAKEFEEADNKKKAAVDSKNELENYTHSVKQAVTDPSNSNNIEESSRSQIESKCAEIMKFVDENPNEDQGTYDLRRKELEDLWNPIAVTLYAQKNNQSNQTSTESTGPTVEEVD</sequence>
<comment type="function">
    <text evidence="1">In cooperation with other chaperones, Hsp70s stabilize preexistent proteins against aggregation and mediate the folding of newly translated polypeptides.</text>
</comment>
<comment type="similarity">
    <text evidence="3">Belongs to the heat shock protein 70 family.</text>
</comment>
<gene>
    <name type="primary">HSP70</name>
    <name type="ordered locus">MIMI_L393</name>
</gene>
<organism>
    <name type="scientific">Acanthamoeba polyphaga mimivirus</name>
    <name type="common">APMV</name>
    <dbReference type="NCBI Taxonomy" id="212035"/>
    <lineage>
        <taxon>Viruses</taxon>
        <taxon>Varidnaviria</taxon>
        <taxon>Bamfordvirae</taxon>
        <taxon>Nucleocytoviricota</taxon>
        <taxon>Megaviricetes</taxon>
        <taxon>Imitervirales</taxon>
        <taxon>Mimiviridae</taxon>
        <taxon>Megamimivirinae</taxon>
        <taxon>Mimivirus</taxon>
        <taxon>Mimivirus bradfordmassiliense</taxon>
    </lineage>
</organism>
<evidence type="ECO:0000250" key="1"/>
<evidence type="ECO:0000256" key="2">
    <source>
        <dbReference type="SAM" id="MobiDB-lite"/>
    </source>
</evidence>
<evidence type="ECO:0000305" key="3"/>
<reference key="1">
    <citation type="journal article" date="2004" name="Science">
        <title>The 1.2-megabase genome sequence of Mimivirus.</title>
        <authorList>
            <person name="Raoult D."/>
            <person name="Audic S."/>
            <person name="Robert C."/>
            <person name="Abergel C."/>
            <person name="Renesto P."/>
            <person name="Ogata H."/>
            <person name="La Scola B."/>
            <person name="Susan M."/>
            <person name="Claverie J.-M."/>
        </authorList>
    </citation>
    <scope>NUCLEOTIDE SEQUENCE [LARGE SCALE GENOMIC DNA]</scope>
    <source>
        <strain>Rowbotham-Bradford</strain>
    </source>
</reference>
<dbReference type="EMBL" id="AY653733">
    <property type="protein sequence ID" value="AAV50662.1"/>
    <property type="molecule type" value="Genomic_DNA"/>
</dbReference>
<dbReference type="SMR" id="Q5UQ49"/>
<dbReference type="KEGG" id="vg:9925014"/>
<dbReference type="OrthoDB" id="5915at10239"/>
<dbReference type="Proteomes" id="UP000001134">
    <property type="component" value="Genome"/>
</dbReference>
<dbReference type="GO" id="GO:0005524">
    <property type="term" value="F:ATP binding"/>
    <property type="evidence" value="ECO:0007669"/>
    <property type="project" value="UniProtKB-KW"/>
</dbReference>
<dbReference type="GO" id="GO:0140662">
    <property type="term" value="F:ATP-dependent protein folding chaperone"/>
    <property type="evidence" value="ECO:0007669"/>
    <property type="project" value="InterPro"/>
</dbReference>
<dbReference type="CDD" id="cd10233">
    <property type="entry name" value="ASKHA_NBD_HSP70_HSPA1"/>
    <property type="match status" value="1"/>
</dbReference>
<dbReference type="FunFam" id="2.60.34.10:FF:000002">
    <property type="entry name" value="Heat shock 70 kDa"/>
    <property type="match status" value="1"/>
</dbReference>
<dbReference type="FunFam" id="3.90.640.10:FF:000002">
    <property type="entry name" value="Heat shock 70 kDa"/>
    <property type="match status" value="1"/>
</dbReference>
<dbReference type="FunFam" id="3.30.30.30:FF:000001">
    <property type="entry name" value="heat shock 70 kDa protein-like"/>
    <property type="match status" value="1"/>
</dbReference>
<dbReference type="FunFam" id="3.30.420.40:FF:000026">
    <property type="entry name" value="Heat shock protein 70"/>
    <property type="match status" value="1"/>
</dbReference>
<dbReference type="Gene3D" id="1.20.1270.10">
    <property type="match status" value="1"/>
</dbReference>
<dbReference type="Gene3D" id="3.30.30.30">
    <property type="match status" value="1"/>
</dbReference>
<dbReference type="Gene3D" id="3.30.420.40">
    <property type="match status" value="2"/>
</dbReference>
<dbReference type="Gene3D" id="3.90.640.10">
    <property type="entry name" value="Actin, Chain A, domain 4"/>
    <property type="match status" value="1"/>
</dbReference>
<dbReference type="Gene3D" id="2.60.34.10">
    <property type="entry name" value="Substrate Binding Domain Of DNAk, Chain A, domain 1"/>
    <property type="match status" value="1"/>
</dbReference>
<dbReference type="InterPro" id="IPR043129">
    <property type="entry name" value="ATPase_NBD"/>
</dbReference>
<dbReference type="InterPro" id="IPR018181">
    <property type="entry name" value="Heat_shock_70_CS"/>
</dbReference>
<dbReference type="InterPro" id="IPR029048">
    <property type="entry name" value="HSP70_C_sf"/>
</dbReference>
<dbReference type="InterPro" id="IPR029047">
    <property type="entry name" value="HSP70_peptide-bd_sf"/>
</dbReference>
<dbReference type="InterPro" id="IPR013126">
    <property type="entry name" value="Hsp_70_fam"/>
</dbReference>
<dbReference type="NCBIfam" id="NF001413">
    <property type="entry name" value="PRK00290.1"/>
    <property type="match status" value="1"/>
</dbReference>
<dbReference type="PANTHER" id="PTHR19375">
    <property type="entry name" value="HEAT SHOCK PROTEIN 70KDA"/>
    <property type="match status" value="1"/>
</dbReference>
<dbReference type="Pfam" id="PF00012">
    <property type="entry name" value="HSP70"/>
    <property type="match status" value="1"/>
</dbReference>
<dbReference type="PRINTS" id="PR00301">
    <property type="entry name" value="HEATSHOCK70"/>
</dbReference>
<dbReference type="SUPFAM" id="SSF53067">
    <property type="entry name" value="Actin-like ATPase domain"/>
    <property type="match status" value="2"/>
</dbReference>
<dbReference type="SUPFAM" id="SSF100934">
    <property type="entry name" value="Heat shock protein 70kD (HSP70), C-terminal subdomain"/>
    <property type="match status" value="1"/>
</dbReference>
<dbReference type="SUPFAM" id="SSF100920">
    <property type="entry name" value="Heat shock protein 70kD (HSP70), peptide-binding domain"/>
    <property type="match status" value="1"/>
</dbReference>
<dbReference type="PROSITE" id="PS00297">
    <property type="entry name" value="HSP70_1"/>
    <property type="match status" value="1"/>
</dbReference>
<dbReference type="PROSITE" id="PS00329">
    <property type="entry name" value="HSP70_2"/>
    <property type="match status" value="1"/>
</dbReference>
<dbReference type="PROSITE" id="PS01036">
    <property type="entry name" value="HSP70_3"/>
    <property type="match status" value="1"/>
</dbReference>